<protein>
    <recommendedName>
        <fullName>L-cystine uptake protein TcyP</fullName>
    </recommendedName>
    <alternativeName>
        <fullName>Transporter of cystine TcyP</fullName>
    </alternativeName>
</protein>
<feature type="chain" id="PRO_0000279738" description="L-cystine uptake protein TcyP">
    <location>
        <begin position="1"/>
        <end position="464"/>
    </location>
</feature>
<feature type="transmembrane region" description="Helical" evidence="2">
    <location>
        <begin position="3"/>
        <end position="23"/>
    </location>
</feature>
<feature type="transmembrane region" description="Helical" evidence="2">
    <location>
        <begin position="34"/>
        <end position="54"/>
    </location>
</feature>
<feature type="transmembrane region" description="Helical" evidence="2">
    <location>
        <begin position="73"/>
        <end position="93"/>
    </location>
</feature>
<feature type="transmembrane region" description="Helical" evidence="2">
    <location>
        <begin position="107"/>
        <end position="127"/>
    </location>
</feature>
<feature type="transmembrane region" description="Helical" evidence="2">
    <location>
        <begin position="184"/>
        <end position="204"/>
    </location>
</feature>
<feature type="transmembrane region" description="Helical" evidence="2">
    <location>
        <begin position="225"/>
        <end position="245"/>
    </location>
</feature>
<feature type="transmembrane region" description="Helical" evidence="2">
    <location>
        <begin position="263"/>
        <end position="283"/>
    </location>
</feature>
<feature type="transmembrane region" description="Helical" evidence="2">
    <location>
        <begin position="347"/>
        <end position="367"/>
    </location>
</feature>
<feature type="transmembrane region" description="Helical" evidence="2">
    <location>
        <begin position="371"/>
        <end position="391"/>
    </location>
</feature>
<feature type="transmembrane region" description="Helical" evidence="2">
    <location>
        <begin position="395"/>
        <end position="415"/>
    </location>
</feature>
<gene>
    <name type="ordered locus">BCE33L3998</name>
</gene>
<keyword id="KW-0029">Amino-acid transport</keyword>
<keyword id="KW-0472">Membrane</keyword>
<keyword id="KW-0812">Transmembrane</keyword>
<keyword id="KW-1133">Transmembrane helix</keyword>
<keyword id="KW-0813">Transport</keyword>
<name>TCYP_BACCZ</name>
<dbReference type="EMBL" id="CP000001">
    <property type="protein sequence ID" value="AAU16272.1"/>
    <property type="molecule type" value="Genomic_DNA"/>
</dbReference>
<dbReference type="RefSeq" id="WP_001094329.1">
    <property type="nucleotide sequence ID" value="NZ_CP009968.1"/>
</dbReference>
<dbReference type="SMR" id="Q634T9"/>
<dbReference type="KEGG" id="bcz:BCE33L3998"/>
<dbReference type="PATRIC" id="fig|288681.22.peg.1396"/>
<dbReference type="Proteomes" id="UP000002612">
    <property type="component" value="Chromosome"/>
</dbReference>
<dbReference type="GO" id="GO:0005886">
    <property type="term" value="C:plasma membrane"/>
    <property type="evidence" value="ECO:0007669"/>
    <property type="project" value="TreeGrafter"/>
</dbReference>
<dbReference type="GO" id="GO:0015184">
    <property type="term" value="F:L-cystine transmembrane transporter activity"/>
    <property type="evidence" value="ECO:0007669"/>
    <property type="project" value="TreeGrafter"/>
</dbReference>
<dbReference type="GO" id="GO:0015293">
    <property type="term" value="F:symporter activity"/>
    <property type="evidence" value="ECO:0007669"/>
    <property type="project" value="InterPro"/>
</dbReference>
<dbReference type="FunFam" id="1.10.3860.10:FF:000004">
    <property type="entry name" value="L-cystine transporter tcyP"/>
    <property type="match status" value="1"/>
</dbReference>
<dbReference type="Gene3D" id="1.10.3860.10">
    <property type="entry name" value="Sodium:dicarboxylate symporter"/>
    <property type="match status" value="1"/>
</dbReference>
<dbReference type="InterPro" id="IPR001991">
    <property type="entry name" value="Na-dicarboxylate_symporter"/>
</dbReference>
<dbReference type="InterPro" id="IPR036458">
    <property type="entry name" value="Na:dicarbo_symporter_sf"/>
</dbReference>
<dbReference type="PANTHER" id="PTHR42865:SF5">
    <property type="entry name" value="L-CYSTINE TRANSPORTER TCYP"/>
    <property type="match status" value="1"/>
</dbReference>
<dbReference type="PANTHER" id="PTHR42865">
    <property type="entry name" value="PROTON/GLUTAMATE-ASPARTATE SYMPORTER"/>
    <property type="match status" value="1"/>
</dbReference>
<dbReference type="Pfam" id="PF00375">
    <property type="entry name" value="SDF"/>
    <property type="match status" value="1"/>
</dbReference>
<dbReference type="PRINTS" id="PR00173">
    <property type="entry name" value="EDTRNSPORT"/>
</dbReference>
<dbReference type="SUPFAM" id="SSF118215">
    <property type="entry name" value="Proton glutamate symport protein"/>
    <property type="match status" value="1"/>
</dbReference>
<sequence length="464" mass="49256">MNTLLVGINVAVMLILVGVLYYMQRKHVSFNKRVFTALGIGIIFGLILQFIYEPTSKVIIESNTWFGLIGSGYVKLLQMIVMPLILVSIISAFTKLQLTKNLGKISGLIIGILILTTGIAAAVGIAASAGFDVSATGLQQGDAESARLKLVEERFTSIEKTTIPDKLLELLPTNPFLDLTGARPTSTISVVIFAAFIGIAFIGVKRKYPEQAELFKKMLDAVYAIVMRMVTLILRLTPYGVLALMAKTVAGSDINAILKLGNFVLASYVALIVMFVIHLLLIALSGLNPIQYLKKVFPVLTFAFTSRSSAGAMPLNIEAQKEKLGISEGIANFAASFGVSIGQNGCAGIYPAMLAMMVAPTVGIDPLQPQFILTLIAVVAISSFGVAGVGGGATFAALIVLSTMNLPIGIVALVISVEPLIDMGRTALNVSGSMTAGLISSKWLGELDQDTYNQDDTKTGEIAS</sequence>
<proteinExistence type="inferred from homology"/>
<accession>Q634T9</accession>
<evidence type="ECO:0000250" key="1"/>
<evidence type="ECO:0000255" key="2"/>
<evidence type="ECO:0000305" key="3"/>
<organism>
    <name type="scientific">Bacillus cereus (strain ZK / E33L)</name>
    <dbReference type="NCBI Taxonomy" id="288681"/>
    <lineage>
        <taxon>Bacteria</taxon>
        <taxon>Bacillati</taxon>
        <taxon>Bacillota</taxon>
        <taxon>Bacilli</taxon>
        <taxon>Bacillales</taxon>
        <taxon>Bacillaceae</taxon>
        <taxon>Bacillus</taxon>
        <taxon>Bacillus cereus group</taxon>
    </lineage>
</organism>
<comment type="function">
    <text evidence="1">Mediates uptake of L-cystine, the oxidized form of L-cysteine.</text>
</comment>
<comment type="subcellular location">
    <subcellularLocation>
        <location evidence="3">Membrane</location>
        <topology evidence="3">Multi-pass membrane protein</topology>
    </subcellularLocation>
</comment>
<comment type="similarity">
    <text evidence="3">Belongs to the dicarboxylate/amino acid:cation symporter (DAACS) (TC 2.A.23) family.</text>
</comment>
<reference key="1">
    <citation type="journal article" date="2006" name="J. Bacteriol.">
        <title>Pathogenomic sequence analysis of Bacillus cereus and Bacillus thuringiensis isolates closely related to Bacillus anthracis.</title>
        <authorList>
            <person name="Han C.S."/>
            <person name="Xie G."/>
            <person name="Challacombe J.F."/>
            <person name="Altherr M.R."/>
            <person name="Bhotika S.S."/>
            <person name="Bruce D."/>
            <person name="Campbell C.S."/>
            <person name="Campbell M.L."/>
            <person name="Chen J."/>
            <person name="Chertkov O."/>
            <person name="Cleland C."/>
            <person name="Dimitrijevic M."/>
            <person name="Doggett N.A."/>
            <person name="Fawcett J.J."/>
            <person name="Glavina T."/>
            <person name="Goodwin L.A."/>
            <person name="Hill K.K."/>
            <person name="Hitchcock P."/>
            <person name="Jackson P.J."/>
            <person name="Keim P."/>
            <person name="Kewalramani A.R."/>
            <person name="Longmire J."/>
            <person name="Lucas S."/>
            <person name="Malfatti S."/>
            <person name="McMurry K."/>
            <person name="Meincke L.J."/>
            <person name="Misra M."/>
            <person name="Moseman B.L."/>
            <person name="Mundt M."/>
            <person name="Munk A.C."/>
            <person name="Okinaka R.T."/>
            <person name="Parson-Quintana B."/>
            <person name="Reilly L.P."/>
            <person name="Richardson P."/>
            <person name="Robinson D.L."/>
            <person name="Rubin E."/>
            <person name="Saunders E."/>
            <person name="Tapia R."/>
            <person name="Tesmer J.G."/>
            <person name="Thayer N."/>
            <person name="Thompson L.S."/>
            <person name="Tice H."/>
            <person name="Ticknor L.O."/>
            <person name="Wills P.L."/>
            <person name="Brettin T.S."/>
            <person name="Gilna P."/>
        </authorList>
    </citation>
    <scope>NUCLEOTIDE SEQUENCE [LARGE SCALE GENOMIC DNA]</scope>
    <source>
        <strain>ZK / E33L</strain>
    </source>
</reference>